<organism>
    <name type="scientific">Yarrowia lipolytica (strain CLIB 122 / E 150)</name>
    <name type="common">Yeast</name>
    <name type="synonym">Candida lipolytica</name>
    <dbReference type="NCBI Taxonomy" id="284591"/>
    <lineage>
        <taxon>Eukaryota</taxon>
        <taxon>Fungi</taxon>
        <taxon>Dikarya</taxon>
        <taxon>Ascomycota</taxon>
        <taxon>Saccharomycotina</taxon>
        <taxon>Dipodascomycetes</taxon>
        <taxon>Dipodascales</taxon>
        <taxon>Dipodascales incertae sedis</taxon>
        <taxon>Yarrowia</taxon>
    </lineage>
</organism>
<reference key="1">
    <citation type="journal article" date="1995" name="J. Biol. Chem.">
        <title>The Yarrowia lipolytica gene PAY2 encodes a 42-kDa peroxisomal integral membrane protein essential for matrix protein import and peroxisome enlargement but not for peroxisome membrane proliferation.</title>
        <authorList>
            <person name="Eitzen G.A."/>
            <person name="Aitchison J.D."/>
            <person name="Szilard R.K."/>
            <person name="Veenhuis M."/>
            <person name="Nuttley W.M."/>
            <person name="Rachubinski R.A."/>
        </authorList>
    </citation>
    <scope>NUCLEOTIDE SEQUENCE [GENOMIC DNA]</scope>
    <source>
        <strain>E 122</strain>
    </source>
</reference>
<reference key="2">
    <citation type="journal article" date="2004" name="Nature">
        <title>Genome evolution in yeasts.</title>
        <authorList>
            <person name="Dujon B."/>
            <person name="Sherman D."/>
            <person name="Fischer G."/>
            <person name="Durrens P."/>
            <person name="Casaregola S."/>
            <person name="Lafontaine I."/>
            <person name="de Montigny J."/>
            <person name="Marck C."/>
            <person name="Neuveglise C."/>
            <person name="Talla E."/>
            <person name="Goffard N."/>
            <person name="Frangeul L."/>
            <person name="Aigle M."/>
            <person name="Anthouard V."/>
            <person name="Babour A."/>
            <person name="Barbe V."/>
            <person name="Barnay S."/>
            <person name="Blanchin S."/>
            <person name="Beckerich J.-M."/>
            <person name="Beyne E."/>
            <person name="Bleykasten C."/>
            <person name="Boisrame A."/>
            <person name="Boyer J."/>
            <person name="Cattolico L."/>
            <person name="Confanioleri F."/>
            <person name="de Daruvar A."/>
            <person name="Despons L."/>
            <person name="Fabre E."/>
            <person name="Fairhead C."/>
            <person name="Ferry-Dumazet H."/>
            <person name="Groppi A."/>
            <person name="Hantraye F."/>
            <person name="Hennequin C."/>
            <person name="Jauniaux N."/>
            <person name="Joyet P."/>
            <person name="Kachouri R."/>
            <person name="Kerrest A."/>
            <person name="Koszul R."/>
            <person name="Lemaire M."/>
            <person name="Lesur I."/>
            <person name="Ma L."/>
            <person name="Muller H."/>
            <person name="Nicaud J.-M."/>
            <person name="Nikolski M."/>
            <person name="Oztas S."/>
            <person name="Ozier-Kalogeropoulos O."/>
            <person name="Pellenz S."/>
            <person name="Potier S."/>
            <person name="Richard G.-F."/>
            <person name="Straub M.-L."/>
            <person name="Suleau A."/>
            <person name="Swennen D."/>
            <person name="Tekaia F."/>
            <person name="Wesolowski-Louvel M."/>
            <person name="Westhof E."/>
            <person name="Wirth B."/>
            <person name="Zeniou-Meyer M."/>
            <person name="Zivanovic Y."/>
            <person name="Bolotin-Fukuhara M."/>
            <person name="Thierry A."/>
            <person name="Bouchier C."/>
            <person name="Caudron B."/>
            <person name="Scarpelli C."/>
            <person name="Gaillardin C."/>
            <person name="Weissenbach J."/>
            <person name="Wincker P."/>
            <person name="Souciet J.-L."/>
        </authorList>
    </citation>
    <scope>NUCLEOTIDE SEQUENCE [LARGE SCALE GENOMIC DNA]</scope>
    <source>
        <strain>CLIB 122 / E 150</strain>
    </source>
</reference>
<keyword id="KW-0472">Membrane</keyword>
<keyword id="KW-0576">Peroxisome</keyword>
<keyword id="KW-1185">Reference proteome</keyword>
<keyword id="KW-0812">Transmembrane</keyword>
<keyword id="KW-1133">Transmembrane helix</keyword>
<feature type="chain" id="PRO_0000058344" description="Peroxisomal biogenesis factor 9">
    <location>
        <begin position="1"/>
        <end position="404"/>
    </location>
</feature>
<feature type="transmembrane region" description="Helical" evidence="1">
    <location>
        <begin position="73"/>
        <end position="93"/>
    </location>
</feature>
<feature type="transmembrane region" description="Helical" evidence="1">
    <location>
        <begin position="94"/>
        <end position="114"/>
    </location>
</feature>
<feature type="transmembrane region" description="Helical" evidence="1">
    <location>
        <begin position="149"/>
        <end position="169"/>
    </location>
</feature>
<feature type="transmembrane region" description="Helical" evidence="1">
    <location>
        <begin position="349"/>
        <end position="369"/>
    </location>
</feature>
<feature type="region of interest" description="Disordered" evidence="2">
    <location>
        <begin position="180"/>
        <end position="214"/>
    </location>
</feature>
<feature type="compositionally biased region" description="Polar residues" evidence="2">
    <location>
        <begin position="181"/>
        <end position="198"/>
    </location>
</feature>
<feature type="sequence conflict" description="In Ref. 1; AAA64562." evidence="3" ref="1">
    <original>E</original>
    <variation>Q</variation>
    <location>
        <position position="389"/>
    </location>
</feature>
<name>PEX9_YARLI</name>
<evidence type="ECO:0000255" key="1"/>
<evidence type="ECO:0000256" key="2">
    <source>
        <dbReference type="SAM" id="MobiDB-lite"/>
    </source>
</evidence>
<evidence type="ECO:0000305" key="3"/>
<accession>P45817</accession>
<accession>Q6C3C9</accession>
<dbReference type="EMBL" id="U16653">
    <property type="protein sequence ID" value="AAA64562.1"/>
    <property type="molecule type" value="Genomic_DNA"/>
</dbReference>
<dbReference type="EMBL" id="CR382132">
    <property type="status" value="NOT_ANNOTATED_CDS"/>
    <property type="molecule type" value="Genomic_DNA"/>
</dbReference>
<dbReference type="PIR" id="A55444">
    <property type="entry name" value="A55444"/>
</dbReference>
<dbReference type="SMR" id="P45817"/>
<dbReference type="STRING" id="284591.P45817"/>
<dbReference type="InParanoid" id="P45817"/>
<dbReference type="Proteomes" id="UP000001300">
    <property type="component" value="Chromosome F"/>
</dbReference>
<dbReference type="GO" id="GO:0005778">
    <property type="term" value="C:peroxisomal membrane"/>
    <property type="evidence" value="ECO:0007669"/>
    <property type="project" value="UniProtKB-SubCell"/>
</dbReference>
<sequence length="404" mass="44914">MTMSARVRKMALPSNCDLSDVEMICDNVLGCLEDLDSSRVVSRVTSREDVDESTIGDLISLDCVSLETPLFSFLFLGVTLFLFLSLLQQSLVFLLGVFLRLVQLVGHFLLLLMGEQIGVIDKAMSHIPLPEVGQHSQQVQIQHLVERRFGLDVVTAIVVIGDNELFQVVGHQFRVGIMSDGQRSQQSQNSGMNVASSSRGRHQLVPDRPGSQLSSQKLSSLVPLARIAAAEIPCAVQQSLSRLFARSVQNRQVQRPHLDPQRQRNIVGVFGVQHGRAVLLCALGGDLIEKRPNQLVRVVKVLVDKFPRRLPKRLVHLVHLGRGSLVHCRCDRVCQQRGCCHLWHCGGHFFVGLVSWIVDETAACVVFCLFKVVSETQRISSLPRYMHRELNTAGVVWGCGGKHM</sequence>
<proteinExistence type="evidence at transcript level"/>
<gene>
    <name type="primary">PEX9</name>
    <name type="synonym">PAY2</name>
    <name type="ordered locus">YALI0F00748g</name>
</gene>
<comment type="function">
    <text>Essential for the import of peroxisomal matrix proteins.</text>
</comment>
<comment type="subcellular location">
    <subcellularLocation>
        <location evidence="3">Peroxisome membrane</location>
        <topology evidence="3">Multi-pass membrane protein</topology>
    </subcellularLocation>
</comment>
<comment type="induction">
    <text>By growth on oleic acid.</text>
</comment>
<comment type="caution">
    <text evidence="3">It is uncertain whether Met-1 or Met-10 is the initiator.</text>
</comment>
<comment type="sequence caution" evidence="3">
    <conflict type="frameshift">
        <sequence resource="EMBL" id="CR382132"/>
    </conflict>
</comment>
<protein>
    <recommendedName>
        <fullName>Peroxisomal biogenesis factor 9</fullName>
    </recommendedName>
    <alternativeName>
        <fullName>Peroxin-9</fullName>
    </alternativeName>
    <alternativeName>
        <fullName>Peroxisomal protein PAY2</fullName>
    </alternativeName>
</protein>